<accession>O59306</accession>
<keyword id="KW-0687">Ribonucleoprotein</keyword>
<keyword id="KW-0689">Ribosomal protein</keyword>
<keyword id="KW-0694">RNA-binding</keyword>
<keyword id="KW-0699">rRNA-binding</keyword>
<evidence type="ECO:0000255" key="1">
    <source>
        <dbReference type="HAMAP-Rule" id="MF_01306"/>
    </source>
</evidence>
<evidence type="ECO:0000305" key="2"/>
<gene>
    <name evidence="1" type="primary">rps4</name>
    <name type="ordered locus">PH1640</name>
</gene>
<comment type="function">
    <text evidence="1">One of the primary rRNA binding proteins, it binds directly to 16S rRNA where it nucleates assembly of the body of the 30S subunit.</text>
</comment>
<comment type="function">
    <text evidence="1">With S5 and S12 plays an important role in translational accuracy.</text>
</comment>
<comment type="subunit">
    <text evidence="1">Part of the 30S ribosomal subunit. Contacts protein S5. The interaction surface between S4 and S5 is involved in control of translational fidelity.</text>
</comment>
<comment type="similarity">
    <text evidence="1">Belongs to the universal ribosomal protein uS4 family.</text>
</comment>
<name>RS4_PYRHO</name>
<protein>
    <recommendedName>
        <fullName evidence="1">Small ribosomal subunit protein uS4</fullName>
    </recommendedName>
    <alternativeName>
        <fullName evidence="2">30S ribosomal protein S4</fullName>
    </alternativeName>
</protein>
<sequence>MGDPKRQRKKYETPPHPWIKERLDRERVLMDKYELKNKKELWKHETQLKNFRRRARRLLAARGKQAEIEREQLLSRLKRLGLLPEDAVLDDVLSLTVEDILERRLQTIVYKKGLARTMRQARQLIVHGHIEVNGQIIRSPSYLVLKEEEDKITYARTSPFANPQHPERMMIEKAKQGGEA</sequence>
<proteinExistence type="inferred from homology"/>
<dbReference type="EMBL" id="BA000001">
    <property type="protein sequence ID" value="BAA30752.1"/>
    <property type="molecule type" value="Genomic_DNA"/>
</dbReference>
<dbReference type="PIR" id="H71043">
    <property type="entry name" value="H71043"/>
</dbReference>
<dbReference type="RefSeq" id="WP_010885708.1">
    <property type="nucleotide sequence ID" value="NC_000961.1"/>
</dbReference>
<dbReference type="SMR" id="O59306"/>
<dbReference type="STRING" id="70601.gene:9378632"/>
<dbReference type="EnsemblBacteria" id="BAA30752">
    <property type="protein sequence ID" value="BAA30752"/>
    <property type="gene ID" value="BAA30752"/>
</dbReference>
<dbReference type="GeneID" id="1442489"/>
<dbReference type="KEGG" id="pho:PH1640"/>
<dbReference type="eggNOG" id="arCOG04239">
    <property type="taxonomic scope" value="Archaea"/>
</dbReference>
<dbReference type="OrthoDB" id="10429at2157"/>
<dbReference type="Proteomes" id="UP000000752">
    <property type="component" value="Chromosome"/>
</dbReference>
<dbReference type="GO" id="GO:0015935">
    <property type="term" value="C:small ribosomal subunit"/>
    <property type="evidence" value="ECO:0007669"/>
    <property type="project" value="InterPro"/>
</dbReference>
<dbReference type="GO" id="GO:0019843">
    <property type="term" value="F:rRNA binding"/>
    <property type="evidence" value="ECO:0007669"/>
    <property type="project" value="UniProtKB-UniRule"/>
</dbReference>
<dbReference type="GO" id="GO:0003735">
    <property type="term" value="F:structural constituent of ribosome"/>
    <property type="evidence" value="ECO:0007669"/>
    <property type="project" value="InterPro"/>
</dbReference>
<dbReference type="GO" id="GO:0042274">
    <property type="term" value="P:ribosomal small subunit biogenesis"/>
    <property type="evidence" value="ECO:0007669"/>
    <property type="project" value="TreeGrafter"/>
</dbReference>
<dbReference type="GO" id="GO:0006412">
    <property type="term" value="P:translation"/>
    <property type="evidence" value="ECO:0007669"/>
    <property type="project" value="UniProtKB-UniRule"/>
</dbReference>
<dbReference type="CDD" id="cd00165">
    <property type="entry name" value="S4"/>
    <property type="match status" value="1"/>
</dbReference>
<dbReference type="FunFam" id="3.10.290.10:FF:000026">
    <property type="entry name" value="30S ribosomal protein S4"/>
    <property type="match status" value="1"/>
</dbReference>
<dbReference type="Gene3D" id="3.10.290.10">
    <property type="entry name" value="RNA-binding S4 domain"/>
    <property type="match status" value="1"/>
</dbReference>
<dbReference type="HAMAP" id="MF_01306_A">
    <property type="entry name" value="Ribosomal_uS4_A"/>
    <property type="match status" value="1"/>
</dbReference>
<dbReference type="InterPro" id="IPR022801">
    <property type="entry name" value="Ribosomal_uS4"/>
</dbReference>
<dbReference type="InterPro" id="IPR022802">
    <property type="entry name" value="Ribosomal_uS4_arc"/>
</dbReference>
<dbReference type="InterPro" id="IPR018079">
    <property type="entry name" value="Ribosomal_uS4_CS"/>
</dbReference>
<dbReference type="InterPro" id="IPR005710">
    <property type="entry name" value="Ribosomal_uS4_euk/arc"/>
</dbReference>
<dbReference type="InterPro" id="IPR001912">
    <property type="entry name" value="Ribosomal_uS4_N"/>
</dbReference>
<dbReference type="InterPro" id="IPR002942">
    <property type="entry name" value="S4_RNA-bd"/>
</dbReference>
<dbReference type="InterPro" id="IPR036986">
    <property type="entry name" value="S4_RNA-bd_sf"/>
</dbReference>
<dbReference type="NCBIfam" id="NF003139">
    <property type="entry name" value="PRK04051.1"/>
    <property type="match status" value="1"/>
</dbReference>
<dbReference type="NCBIfam" id="TIGR01018">
    <property type="entry name" value="uS4_arch"/>
    <property type="match status" value="1"/>
</dbReference>
<dbReference type="PANTHER" id="PTHR11831">
    <property type="entry name" value="30S 40S RIBOSOMAL PROTEIN"/>
    <property type="match status" value="1"/>
</dbReference>
<dbReference type="PANTHER" id="PTHR11831:SF5">
    <property type="entry name" value="40S RIBOSOMAL PROTEIN S9"/>
    <property type="match status" value="1"/>
</dbReference>
<dbReference type="Pfam" id="PF00163">
    <property type="entry name" value="Ribosomal_S4"/>
    <property type="match status" value="1"/>
</dbReference>
<dbReference type="Pfam" id="PF01479">
    <property type="entry name" value="S4"/>
    <property type="match status" value="1"/>
</dbReference>
<dbReference type="SMART" id="SM01390">
    <property type="entry name" value="Ribosomal_S4"/>
    <property type="match status" value="1"/>
</dbReference>
<dbReference type="SMART" id="SM00363">
    <property type="entry name" value="S4"/>
    <property type="match status" value="1"/>
</dbReference>
<dbReference type="SUPFAM" id="SSF55174">
    <property type="entry name" value="Alpha-L RNA-binding motif"/>
    <property type="match status" value="1"/>
</dbReference>
<dbReference type="PROSITE" id="PS00632">
    <property type="entry name" value="RIBOSOMAL_S4"/>
    <property type="match status" value="1"/>
</dbReference>
<dbReference type="PROSITE" id="PS50889">
    <property type="entry name" value="S4"/>
    <property type="match status" value="1"/>
</dbReference>
<feature type="chain" id="PRO_0000132518" description="Small ribosomal subunit protein uS4">
    <location>
        <begin position="1"/>
        <end position="180"/>
    </location>
</feature>
<feature type="domain" description="S4 RNA-binding" evidence="1">
    <location>
        <begin position="103"/>
        <end position="174"/>
    </location>
</feature>
<organism>
    <name type="scientific">Pyrococcus horikoshii (strain ATCC 700860 / DSM 12428 / JCM 9974 / NBRC 100139 / OT-3)</name>
    <dbReference type="NCBI Taxonomy" id="70601"/>
    <lineage>
        <taxon>Archaea</taxon>
        <taxon>Methanobacteriati</taxon>
        <taxon>Methanobacteriota</taxon>
        <taxon>Thermococci</taxon>
        <taxon>Thermococcales</taxon>
        <taxon>Thermococcaceae</taxon>
        <taxon>Pyrococcus</taxon>
    </lineage>
</organism>
<reference key="1">
    <citation type="journal article" date="1998" name="DNA Res.">
        <title>Complete sequence and gene organization of the genome of a hyper-thermophilic archaebacterium, Pyrococcus horikoshii OT3.</title>
        <authorList>
            <person name="Kawarabayasi Y."/>
            <person name="Sawada M."/>
            <person name="Horikawa H."/>
            <person name="Haikawa Y."/>
            <person name="Hino Y."/>
            <person name="Yamamoto S."/>
            <person name="Sekine M."/>
            <person name="Baba S."/>
            <person name="Kosugi H."/>
            <person name="Hosoyama A."/>
            <person name="Nagai Y."/>
            <person name="Sakai M."/>
            <person name="Ogura K."/>
            <person name="Otsuka R."/>
            <person name="Nakazawa H."/>
            <person name="Takamiya M."/>
            <person name="Ohfuku Y."/>
            <person name="Funahashi T."/>
            <person name="Tanaka T."/>
            <person name="Kudoh Y."/>
            <person name="Yamazaki J."/>
            <person name="Kushida N."/>
            <person name="Oguchi A."/>
            <person name="Aoki K."/>
            <person name="Yoshizawa T."/>
            <person name="Nakamura Y."/>
            <person name="Robb F.T."/>
            <person name="Horikoshi K."/>
            <person name="Masuchi Y."/>
            <person name="Shizuya H."/>
            <person name="Kikuchi H."/>
        </authorList>
    </citation>
    <scope>NUCLEOTIDE SEQUENCE [LARGE SCALE GENOMIC DNA]</scope>
    <source>
        <strain>ATCC 700860 / DSM 12428 / JCM 9974 / NBRC 100139 / OT-3</strain>
    </source>
</reference>